<sequence>MSQFDVTVFTDGSCLGNPGPGGWAAIMRCNGCEKELSGGFALTTNNRMEILAVLEALEALRDPCKVTLFTDSQYVRNAVEKKWLAGWQRNGWKTADKKPVKNRDLWERLVPLLAKHSVSFRWVRGHSGHPENERCDVLARAQASRRGLPEDPGFTA</sequence>
<proteinExistence type="inferred from homology"/>
<dbReference type="EC" id="3.1.26.4" evidence="1"/>
<dbReference type="EMBL" id="AE017285">
    <property type="protein sequence ID" value="AAS95170.1"/>
    <property type="molecule type" value="Genomic_DNA"/>
</dbReference>
<dbReference type="RefSeq" id="WP_010937992.1">
    <property type="nucleotide sequence ID" value="NC_002937.3"/>
</dbReference>
<dbReference type="RefSeq" id="YP_009911.1">
    <property type="nucleotide sequence ID" value="NC_002937.3"/>
</dbReference>
<dbReference type="SMR" id="Q72E89"/>
<dbReference type="STRING" id="882.DVU_0689"/>
<dbReference type="PaxDb" id="882-DVU_0689"/>
<dbReference type="EnsemblBacteria" id="AAS95170">
    <property type="protein sequence ID" value="AAS95170"/>
    <property type="gene ID" value="DVU_0689"/>
</dbReference>
<dbReference type="KEGG" id="dvu:DVU_0689"/>
<dbReference type="PATRIC" id="fig|882.5.peg.645"/>
<dbReference type="eggNOG" id="COG0328">
    <property type="taxonomic scope" value="Bacteria"/>
</dbReference>
<dbReference type="HOGENOM" id="CLU_030894_6_2_7"/>
<dbReference type="OrthoDB" id="7845843at2"/>
<dbReference type="PhylomeDB" id="Q72E89"/>
<dbReference type="Proteomes" id="UP000002194">
    <property type="component" value="Chromosome"/>
</dbReference>
<dbReference type="GO" id="GO:0005737">
    <property type="term" value="C:cytoplasm"/>
    <property type="evidence" value="ECO:0007669"/>
    <property type="project" value="UniProtKB-SubCell"/>
</dbReference>
<dbReference type="GO" id="GO:0000287">
    <property type="term" value="F:magnesium ion binding"/>
    <property type="evidence" value="ECO:0007669"/>
    <property type="project" value="UniProtKB-UniRule"/>
</dbReference>
<dbReference type="GO" id="GO:0003676">
    <property type="term" value="F:nucleic acid binding"/>
    <property type="evidence" value="ECO:0007669"/>
    <property type="project" value="InterPro"/>
</dbReference>
<dbReference type="GO" id="GO:0004523">
    <property type="term" value="F:RNA-DNA hybrid ribonuclease activity"/>
    <property type="evidence" value="ECO:0007669"/>
    <property type="project" value="UniProtKB-UniRule"/>
</dbReference>
<dbReference type="GO" id="GO:0043137">
    <property type="term" value="P:DNA replication, removal of RNA primer"/>
    <property type="evidence" value="ECO:0007669"/>
    <property type="project" value="TreeGrafter"/>
</dbReference>
<dbReference type="CDD" id="cd09278">
    <property type="entry name" value="RNase_HI_prokaryote_like"/>
    <property type="match status" value="1"/>
</dbReference>
<dbReference type="FunFam" id="3.30.420.10:FF:000089">
    <property type="entry name" value="Ribonuclease H"/>
    <property type="match status" value="1"/>
</dbReference>
<dbReference type="Gene3D" id="3.30.420.10">
    <property type="entry name" value="Ribonuclease H-like superfamily/Ribonuclease H"/>
    <property type="match status" value="1"/>
</dbReference>
<dbReference type="HAMAP" id="MF_00042">
    <property type="entry name" value="RNase_H"/>
    <property type="match status" value="1"/>
</dbReference>
<dbReference type="InterPro" id="IPR050092">
    <property type="entry name" value="RNase_H"/>
</dbReference>
<dbReference type="InterPro" id="IPR012337">
    <property type="entry name" value="RNaseH-like_sf"/>
</dbReference>
<dbReference type="InterPro" id="IPR002156">
    <property type="entry name" value="RNaseH_domain"/>
</dbReference>
<dbReference type="InterPro" id="IPR036397">
    <property type="entry name" value="RNaseH_sf"/>
</dbReference>
<dbReference type="InterPro" id="IPR022892">
    <property type="entry name" value="RNaseHI"/>
</dbReference>
<dbReference type="NCBIfam" id="NF001236">
    <property type="entry name" value="PRK00203.1"/>
    <property type="match status" value="1"/>
</dbReference>
<dbReference type="PANTHER" id="PTHR10642">
    <property type="entry name" value="RIBONUCLEASE H1"/>
    <property type="match status" value="1"/>
</dbReference>
<dbReference type="PANTHER" id="PTHR10642:SF26">
    <property type="entry name" value="RIBONUCLEASE H1"/>
    <property type="match status" value="1"/>
</dbReference>
<dbReference type="Pfam" id="PF00075">
    <property type="entry name" value="RNase_H"/>
    <property type="match status" value="1"/>
</dbReference>
<dbReference type="SUPFAM" id="SSF53098">
    <property type="entry name" value="Ribonuclease H-like"/>
    <property type="match status" value="1"/>
</dbReference>
<dbReference type="PROSITE" id="PS50879">
    <property type="entry name" value="RNASE_H_1"/>
    <property type="match status" value="1"/>
</dbReference>
<evidence type="ECO:0000255" key="1">
    <source>
        <dbReference type="HAMAP-Rule" id="MF_00042"/>
    </source>
</evidence>
<evidence type="ECO:0000255" key="2">
    <source>
        <dbReference type="PROSITE-ProRule" id="PRU00408"/>
    </source>
</evidence>
<organism>
    <name type="scientific">Nitratidesulfovibrio vulgaris (strain ATCC 29579 / DSM 644 / CCUG 34227 / NCIMB 8303 / VKM B-1760 / Hildenborough)</name>
    <name type="common">Desulfovibrio vulgaris</name>
    <dbReference type="NCBI Taxonomy" id="882"/>
    <lineage>
        <taxon>Bacteria</taxon>
        <taxon>Pseudomonadati</taxon>
        <taxon>Thermodesulfobacteriota</taxon>
        <taxon>Desulfovibrionia</taxon>
        <taxon>Desulfovibrionales</taxon>
        <taxon>Desulfovibrionaceae</taxon>
        <taxon>Nitratidesulfovibrio</taxon>
    </lineage>
</organism>
<name>RNH_NITV2</name>
<accession>Q72E89</accession>
<comment type="function">
    <text evidence="1">Endonuclease that specifically degrades the RNA of RNA-DNA hybrids.</text>
</comment>
<comment type="catalytic activity">
    <reaction evidence="1">
        <text>Endonucleolytic cleavage to 5'-phosphomonoester.</text>
        <dbReference type="EC" id="3.1.26.4"/>
    </reaction>
</comment>
<comment type="cofactor">
    <cofactor evidence="1">
        <name>Mg(2+)</name>
        <dbReference type="ChEBI" id="CHEBI:18420"/>
    </cofactor>
    <text evidence="1">Binds 1 Mg(2+) ion per subunit. May bind a second metal ion at a regulatory site, or after substrate binding.</text>
</comment>
<comment type="subunit">
    <text evidence="1">Monomer.</text>
</comment>
<comment type="subcellular location">
    <subcellularLocation>
        <location evidence="1">Cytoplasm</location>
    </subcellularLocation>
</comment>
<comment type="similarity">
    <text evidence="1">Belongs to the RNase H family.</text>
</comment>
<feature type="chain" id="PRO_0000332590" description="Ribonuclease H">
    <location>
        <begin position="1"/>
        <end position="156"/>
    </location>
</feature>
<feature type="domain" description="RNase H type-1" evidence="2">
    <location>
        <begin position="2"/>
        <end position="144"/>
    </location>
</feature>
<feature type="binding site" evidence="1">
    <location>
        <position position="11"/>
    </location>
    <ligand>
        <name>Mg(2+)</name>
        <dbReference type="ChEBI" id="CHEBI:18420"/>
        <label>1</label>
    </ligand>
</feature>
<feature type="binding site" evidence="1">
    <location>
        <position position="11"/>
    </location>
    <ligand>
        <name>Mg(2+)</name>
        <dbReference type="ChEBI" id="CHEBI:18420"/>
        <label>2</label>
    </ligand>
</feature>
<feature type="binding site" evidence="1">
    <location>
        <position position="49"/>
    </location>
    <ligand>
        <name>Mg(2+)</name>
        <dbReference type="ChEBI" id="CHEBI:18420"/>
        <label>1</label>
    </ligand>
</feature>
<feature type="binding site" evidence="1">
    <location>
        <position position="71"/>
    </location>
    <ligand>
        <name>Mg(2+)</name>
        <dbReference type="ChEBI" id="CHEBI:18420"/>
        <label>1</label>
    </ligand>
</feature>
<feature type="binding site" evidence="1">
    <location>
        <position position="136"/>
    </location>
    <ligand>
        <name>Mg(2+)</name>
        <dbReference type="ChEBI" id="CHEBI:18420"/>
        <label>2</label>
    </ligand>
</feature>
<gene>
    <name evidence="1" type="primary">rnhA</name>
    <name type="ordered locus">DVU_0689</name>
</gene>
<reference key="1">
    <citation type="journal article" date="2004" name="Nat. Biotechnol.">
        <title>The genome sequence of the anaerobic, sulfate-reducing bacterium Desulfovibrio vulgaris Hildenborough.</title>
        <authorList>
            <person name="Heidelberg J.F."/>
            <person name="Seshadri R."/>
            <person name="Haveman S.A."/>
            <person name="Hemme C.L."/>
            <person name="Paulsen I.T."/>
            <person name="Kolonay J.F."/>
            <person name="Eisen J.A."/>
            <person name="Ward N.L."/>
            <person name="Methe B.A."/>
            <person name="Brinkac L.M."/>
            <person name="Daugherty S.C."/>
            <person name="DeBoy R.T."/>
            <person name="Dodson R.J."/>
            <person name="Durkin A.S."/>
            <person name="Madupu R."/>
            <person name="Nelson W.C."/>
            <person name="Sullivan S.A."/>
            <person name="Fouts D.E."/>
            <person name="Haft D.H."/>
            <person name="Selengut J."/>
            <person name="Peterson J.D."/>
            <person name="Davidsen T.M."/>
            <person name="Zafar N."/>
            <person name="Zhou L."/>
            <person name="Radune D."/>
            <person name="Dimitrov G."/>
            <person name="Hance M."/>
            <person name="Tran K."/>
            <person name="Khouri H.M."/>
            <person name="Gill J."/>
            <person name="Utterback T.R."/>
            <person name="Feldblyum T.V."/>
            <person name="Wall J.D."/>
            <person name="Voordouw G."/>
            <person name="Fraser C.M."/>
        </authorList>
    </citation>
    <scope>NUCLEOTIDE SEQUENCE [LARGE SCALE GENOMIC DNA]</scope>
    <source>
        <strain>ATCC 29579 / DSM 644 / CCUG 34227 / NCIMB 8303 / VKM B-1760 / Hildenborough</strain>
    </source>
</reference>
<keyword id="KW-0963">Cytoplasm</keyword>
<keyword id="KW-0255">Endonuclease</keyword>
<keyword id="KW-0378">Hydrolase</keyword>
<keyword id="KW-0460">Magnesium</keyword>
<keyword id="KW-0479">Metal-binding</keyword>
<keyword id="KW-0540">Nuclease</keyword>
<keyword id="KW-1185">Reference proteome</keyword>
<protein>
    <recommendedName>
        <fullName evidence="1">Ribonuclease H</fullName>
        <shortName evidence="1">RNase H</shortName>
        <ecNumber evidence="1">3.1.26.4</ecNumber>
    </recommendedName>
</protein>